<keyword id="KW-0028">Amino-acid biosynthesis</keyword>
<keyword id="KW-0067">ATP-binding</keyword>
<keyword id="KW-0963">Cytoplasm</keyword>
<keyword id="KW-0328">Glycosyltransferase</keyword>
<keyword id="KW-0368">Histidine biosynthesis</keyword>
<keyword id="KW-0547">Nucleotide-binding</keyword>
<keyword id="KW-1185">Reference proteome</keyword>
<keyword id="KW-0808">Transferase</keyword>
<organism>
    <name type="scientific">Cereibacter sphaeroides (strain ATCC 17023 / DSM 158 / JCM 6121 / CCUG 31486 / LMG 2827 / NBRC 12203 / NCIMB 8253 / ATH 2.4.1.)</name>
    <name type="common">Rhodobacter sphaeroides</name>
    <dbReference type="NCBI Taxonomy" id="272943"/>
    <lineage>
        <taxon>Bacteria</taxon>
        <taxon>Pseudomonadati</taxon>
        <taxon>Pseudomonadota</taxon>
        <taxon>Alphaproteobacteria</taxon>
        <taxon>Rhodobacterales</taxon>
        <taxon>Paracoccaceae</taxon>
        <taxon>Cereibacter</taxon>
    </lineage>
</organism>
<name>HIS1_CERS4</name>
<reference key="1">
    <citation type="submission" date="1996-12" db="EMBL/GenBank/DDBJ databases">
        <authorList>
            <person name="Oriol E."/>
        </authorList>
    </citation>
    <scope>NUCLEOTIDE SEQUENCE [GENOMIC DNA]</scope>
</reference>
<reference key="2">
    <citation type="submission" date="2005-09" db="EMBL/GenBank/DDBJ databases">
        <title>Complete sequence of chromosome 2 of Rhodobacter sphaeroides 2.4.1.</title>
        <authorList>
            <person name="Copeland A."/>
            <person name="Lucas S."/>
            <person name="Lapidus A."/>
            <person name="Barry K."/>
            <person name="Detter J.C."/>
            <person name="Glavina T."/>
            <person name="Hammon N."/>
            <person name="Israni S."/>
            <person name="Pitluck S."/>
            <person name="Richardson P."/>
            <person name="Mackenzie C."/>
            <person name="Choudhary M."/>
            <person name="Larimer F."/>
            <person name="Hauser L.J."/>
            <person name="Land M."/>
            <person name="Donohue T.J."/>
            <person name="Kaplan S."/>
        </authorList>
    </citation>
    <scope>NUCLEOTIDE SEQUENCE [LARGE SCALE GENOMIC DNA]</scope>
    <source>
        <strain>ATCC 17023 / DSM 158 / JCM 6121 / CCUG 31486 / LMG 2827 / NBRC 12203 / NCIMB 8253 / ATH 2.4.1.</strain>
    </source>
</reference>
<protein>
    <recommendedName>
        <fullName>ATP phosphoribosyltransferase</fullName>
        <shortName>ATP-PRT</shortName>
        <shortName>ATP-PRTase</shortName>
        <ecNumber>2.4.2.17</ecNumber>
    </recommendedName>
</protein>
<evidence type="ECO:0000250" key="1"/>
<evidence type="ECO:0000305" key="2"/>
<gene>
    <name type="primary">hisG</name>
    <name type="ordered locus">RHOS4_35820</name>
    <name type="ORF">RSP_3549</name>
</gene>
<sequence>MTLKIGVPSKGRLMEKTFDWFGARGVTMRQTGAEREYSGAVDGVDGVELVLLSAGEIPRELGAGRIHLGVTGSDLVREKLADWSLQVAEMAPLGFGHADLIIAVPAFWIDVDTLDDLDAAAAAFRAAHGFRLRIATKYHRLVREFLMANGVADYQLVDSQGATEGTVKNGTAEAIADITSSGETLRANHLKILSDALVHSSQAVLFASRRADWSEAAGPFAALGARLGLPLPEALT</sequence>
<dbReference type="EC" id="2.4.2.17"/>
<dbReference type="EMBL" id="Y10050">
    <property type="protein sequence ID" value="CAA71145.1"/>
    <property type="molecule type" value="Genomic_DNA"/>
</dbReference>
<dbReference type="EMBL" id="CP000144">
    <property type="protein sequence ID" value="ABA81150.1"/>
    <property type="molecule type" value="Genomic_DNA"/>
</dbReference>
<dbReference type="RefSeq" id="WP_002724462.1">
    <property type="nucleotide sequence ID" value="NZ_CP030272.1"/>
</dbReference>
<dbReference type="RefSeq" id="YP_355051.1">
    <property type="nucleotide sequence ID" value="NC_007494.2"/>
</dbReference>
<dbReference type="SMR" id="O08385"/>
<dbReference type="STRING" id="272943.RSP_3549"/>
<dbReference type="EnsemblBacteria" id="ABA81150">
    <property type="protein sequence ID" value="ABA81150"/>
    <property type="gene ID" value="RSP_3549"/>
</dbReference>
<dbReference type="GeneID" id="3721963"/>
<dbReference type="KEGG" id="rsp:RSP_3549"/>
<dbReference type="PATRIC" id="fig|272943.9.peg.3986"/>
<dbReference type="eggNOG" id="COG0040">
    <property type="taxonomic scope" value="Bacteria"/>
</dbReference>
<dbReference type="OrthoDB" id="9806435at2"/>
<dbReference type="PhylomeDB" id="O08385"/>
<dbReference type="UniPathway" id="UPA00031">
    <property type="reaction ID" value="UER00006"/>
</dbReference>
<dbReference type="Proteomes" id="UP000002703">
    <property type="component" value="Chromosome 2"/>
</dbReference>
<dbReference type="GO" id="GO:0005737">
    <property type="term" value="C:cytoplasm"/>
    <property type="evidence" value="ECO:0007669"/>
    <property type="project" value="UniProtKB-SubCell"/>
</dbReference>
<dbReference type="GO" id="GO:0005524">
    <property type="term" value="F:ATP binding"/>
    <property type="evidence" value="ECO:0007669"/>
    <property type="project" value="UniProtKB-KW"/>
</dbReference>
<dbReference type="GO" id="GO:0003879">
    <property type="term" value="F:ATP phosphoribosyltransferase activity"/>
    <property type="evidence" value="ECO:0007669"/>
    <property type="project" value="UniProtKB-EC"/>
</dbReference>
<dbReference type="GO" id="GO:0000105">
    <property type="term" value="P:L-histidine biosynthetic process"/>
    <property type="evidence" value="ECO:0007669"/>
    <property type="project" value="UniProtKB-UniPathway"/>
</dbReference>
<dbReference type="CDD" id="cd13593">
    <property type="entry name" value="PBP2_HisGL3"/>
    <property type="match status" value="1"/>
</dbReference>
<dbReference type="Gene3D" id="3.40.190.10">
    <property type="entry name" value="Periplasmic binding protein-like II"/>
    <property type="match status" value="2"/>
</dbReference>
<dbReference type="InterPro" id="IPR013820">
    <property type="entry name" value="ATP_PRibTrfase_cat"/>
</dbReference>
<dbReference type="InterPro" id="IPR018198">
    <property type="entry name" value="ATP_PRibTrfase_CS"/>
</dbReference>
<dbReference type="InterPro" id="IPR001348">
    <property type="entry name" value="ATP_PRibTrfase_HisG"/>
</dbReference>
<dbReference type="NCBIfam" id="TIGR00070">
    <property type="entry name" value="hisG"/>
    <property type="match status" value="1"/>
</dbReference>
<dbReference type="PANTHER" id="PTHR21403:SF8">
    <property type="entry name" value="ATP PHOSPHORIBOSYLTRANSFERASE"/>
    <property type="match status" value="1"/>
</dbReference>
<dbReference type="PANTHER" id="PTHR21403">
    <property type="entry name" value="ATP PHOSPHORIBOSYLTRANSFERASE ATP-PRTASE"/>
    <property type="match status" value="1"/>
</dbReference>
<dbReference type="Pfam" id="PF01634">
    <property type="entry name" value="HisG"/>
    <property type="match status" value="1"/>
</dbReference>
<dbReference type="SUPFAM" id="SSF53850">
    <property type="entry name" value="Periplasmic binding protein-like II"/>
    <property type="match status" value="1"/>
</dbReference>
<dbReference type="PROSITE" id="PS01316">
    <property type="entry name" value="ATP_P_PHORIBOSYLTR"/>
    <property type="match status" value="1"/>
</dbReference>
<feature type="chain" id="PRO_0000151930" description="ATP phosphoribosyltransferase">
    <location>
        <begin position="1"/>
        <end position="236"/>
    </location>
</feature>
<comment type="function">
    <text evidence="1">Catalyzes the condensation of ATP and 5-phosphoribose 1-diphosphate to form N'-(5'-phosphoribosyl)-ATP (PR-ATP). Has a crucial role in the pathway because the rate of histidine biosynthesis seems to be controlled primarily by regulation of HisG enzymatic activity (By similarity).</text>
</comment>
<comment type="catalytic activity">
    <reaction>
        <text>1-(5-phospho-beta-D-ribosyl)-ATP + diphosphate = 5-phospho-alpha-D-ribose 1-diphosphate + ATP</text>
        <dbReference type="Rhea" id="RHEA:18473"/>
        <dbReference type="ChEBI" id="CHEBI:30616"/>
        <dbReference type="ChEBI" id="CHEBI:33019"/>
        <dbReference type="ChEBI" id="CHEBI:58017"/>
        <dbReference type="ChEBI" id="CHEBI:73183"/>
        <dbReference type="EC" id="2.4.2.17"/>
    </reaction>
</comment>
<comment type="pathway">
    <text>Amino-acid biosynthesis; L-histidine biosynthesis; L-histidine from 5-phospho-alpha-D-ribose 1-diphosphate: step 1/9.</text>
</comment>
<comment type="subunit">
    <text evidence="1">Heteromultimer composed of HisG and HisZ subunits.</text>
</comment>
<comment type="subcellular location">
    <subcellularLocation>
        <location evidence="1">Cytoplasm</location>
    </subcellularLocation>
</comment>
<comment type="domain">
    <text>Lacks the C-terminal regulatory region which is replaced by HisZ.</text>
</comment>
<comment type="similarity">
    <text evidence="2">Belongs to the ATP phosphoribosyltransferase family. Short subfamily.</text>
</comment>
<proteinExistence type="inferred from homology"/>
<accession>O08385</accession>
<accession>Q3IWD4</accession>